<reference key="1">
    <citation type="submission" date="2007-03" db="EMBL/GenBank/DDBJ databases">
        <authorList>
            <consortium name="NIH - Xenopus Gene Collection (XGC) project"/>
        </authorList>
    </citation>
    <scope>NUCLEOTIDE SEQUENCE [LARGE SCALE MRNA]</scope>
    <source>
        <tissue>Embryo</tissue>
    </source>
</reference>
<proteinExistence type="evidence at transcript level"/>
<dbReference type="EC" id="2.1.1.-" evidence="1"/>
<dbReference type="EC" id="2.1.1.218" evidence="1"/>
<dbReference type="EC" id="2.1.1.221" evidence="1"/>
<dbReference type="EMBL" id="BC135659">
    <property type="protein sequence ID" value="AAI35660.1"/>
    <property type="molecule type" value="mRNA"/>
</dbReference>
<dbReference type="RefSeq" id="NP_001096307.1">
    <property type="nucleotide sequence ID" value="NM_001102837.1"/>
</dbReference>
<dbReference type="SMR" id="A4IHS0"/>
<dbReference type="FunCoup" id="A4IHS0">
    <property type="interactions" value="2372"/>
</dbReference>
<dbReference type="STRING" id="8364.ENSXETP00000038566"/>
<dbReference type="PaxDb" id="8364-ENSXETP00000062534"/>
<dbReference type="DNASU" id="100124885"/>
<dbReference type="GeneID" id="100124885"/>
<dbReference type="KEGG" id="xtr:100124885"/>
<dbReference type="AGR" id="Xenbase:XB-GENE-877279"/>
<dbReference type="CTD" id="54931"/>
<dbReference type="Xenbase" id="XB-GENE-877279">
    <property type="gene designation" value="trmt10c"/>
</dbReference>
<dbReference type="eggNOG" id="KOG2967">
    <property type="taxonomic scope" value="Eukaryota"/>
</dbReference>
<dbReference type="InParanoid" id="A4IHS0"/>
<dbReference type="OMA" id="TIMECVS"/>
<dbReference type="OrthoDB" id="9976048at2759"/>
<dbReference type="Proteomes" id="UP000008143">
    <property type="component" value="Chromosome 2"/>
</dbReference>
<dbReference type="GO" id="GO:0042645">
    <property type="term" value="C:mitochondrial nucleoid"/>
    <property type="evidence" value="ECO:0007669"/>
    <property type="project" value="UniProtKB-SubCell"/>
</dbReference>
<dbReference type="GO" id="GO:0005739">
    <property type="term" value="C:mitochondrion"/>
    <property type="evidence" value="ECO:0000250"/>
    <property type="project" value="UniProtKB"/>
</dbReference>
<dbReference type="GO" id="GO:0160106">
    <property type="term" value="F:tRNA (adenine(9)-N1)-methyltransferase activity"/>
    <property type="evidence" value="ECO:0007669"/>
    <property type="project" value="UniProtKB-EC"/>
</dbReference>
<dbReference type="GO" id="GO:0052905">
    <property type="term" value="F:tRNA (guanosine(9)-N1)-methyltransferase activity"/>
    <property type="evidence" value="ECO:0007669"/>
    <property type="project" value="UniProtKB-EC"/>
</dbReference>
<dbReference type="GO" id="GO:0000049">
    <property type="term" value="F:tRNA binding"/>
    <property type="evidence" value="ECO:0000250"/>
    <property type="project" value="UniProtKB"/>
</dbReference>
<dbReference type="GO" id="GO:0032259">
    <property type="term" value="P:methylation"/>
    <property type="evidence" value="ECO:0007669"/>
    <property type="project" value="UniProtKB-KW"/>
</dbReference>
<dbReference type="GO" id="GO:0097745">
    <property type="term" value="P:mitochondrial tRNA 5'-end processing"/>
    <property type="evidence" value="ECO:0000250"/>
    <property type="project" value="UniProtKB"/>
</dbReference>
<dbReference type="GO" id="GO:0090646">
    <property type="term" value="P:mitochondrial tRNA processing"/>
    <property type="evidence" value="ECO:0000250"/>
    <property type="project" value="UniProtKB"/>
</dbReference>
<dbReference type="GO" id="GO:0006397">
    <property type="term" value="P:mRNA processing"/>
    <property type="evidence" value="ECO:0000250"/>
    <property type="project" value="UniProtKB"/>
</dbReference>
<dbReference type="CDD" id="cd18102">
    <property type="entry name" value="Trm10_MRRP1"/>
    <property type="match status" value="1"/>
</dbReference>
<dbReference type="FunFam" id="3.40.1280.30:FF:000003">
    <property type="entry name" value="tRNA methyltransferase 10C, mitochondrial RNase P subunit"/>
    <property type="match status" value="1"/>
</dbReference>
<dbReference type="Gene3D" id="3.40.1280.30">
    <property type="match status" value="1"/>
</dbReference>
<dbReference type="InterPro" id="IPR028564">
    <property type="entry name" value="MT_TRM10-typ"/>
</dbReference>
<dbReference type="InterPro" id="IPR038459">
    <property type="entry name" value="MT_TRM10-typ_sf"/>
</dbReference>
<dbReference type="InterPro" id="IPR025812">
    <property type="entry name" value="Trm10_C_MTase_dom"/>
</dbReference>
<dbReference type="InterPro" id="IPR007356">
    <property type="entry name" value="tRNA_m1G_MeTrfase_euk"/>
</dbReference>
<dbReference type="InterPro" id="IPR016009">
    <property type="entry name" value="tRNA_MeTrfase_TRMD/TRM10"/>
</dbReference>
<dbReference type="PANTHER" id="PTHR13563">
    <property type="entry name" value="TRNA (GUANINE-9-) METHYLTRANSFERASE"/>
    <property type="match status" value="1"/>
</dbReference>
<dbReference type="PANTHER" id="PTHR13563:SF5">
    <property type="entry name" value="TRNA METHYLTRANSFERASE 10 HOMOLOG C"/>
    <property type="match status" value="1"/>
</dbReference>
<dbReference type="Pfam" id="PF01746">
    <property type="entry name" value="tRNA_m1G_MT"/>
    <property type="match status" value="1"/>
</dbReference>
<dbReference type="PROSITE" id="PS51675">
    <property type="entry name" value="SAM_MT_TRM10"/>
    <property type="match status" value="1"/>
</dbReference>
<evidence type="ECO:0000250" key="1">
    <source>
        <dbReference type="UniProtKB" id="Q7L0Y3"/>
    </source>
</evidence>
<evidence type="ECO:0000255" key="2"/>
<evidence type="ECO:0000255" key="3">
    <source>
        <dbReference type="PROSITE-ProRule" id="PRU01012"/>
    </source>
</evidence>
<evidence type="ECO:0000256" key="4">
    <source>
        <dbReference type="SAM" id="MobiDB-lite"/>
    </source>
</evidence>
<evidence type="ECO:0000305" key="5"/>
<organism>
    <name type="scientific">Xenopus tropicalis</name>
    <name type="common">Western clawed frog</name>
    <name type="synonym">Silurana tropicalis</name>
    <dbReference type="NCBI Taxonomy" id="8364"/>
    <lineage>
        <taxon>Eukaryota</taxon>
        <taxon>Metazoa</taxon>
        <taxon>Chordata</taxon>
        <taxon>Craniata</taxon>
        <taxon>Vertebrata</taxon>
        <taxon>Euteleostomi</taxon>
        <taxon>Amphibia</taxon>
        <taxon>Batrachia</taxon>
        <taxon>Anura</taxon>
        <taxon>Pipoidea</taxon>
        <taxon>Pipidae</taxon>
        <taxon>Xenopodinae</taxon>
        <taxon>Xenopus</taxon>
        <taxon>Silurana</taxon>
    </lineage>
</organism>
<gene>
    <name evidence="1" type="primary">trmt10c</name>
    <name evidence="1" type="synonym">mrpp1</name>
    <name evidence="1" type="synonym">rg9mtd1</name>
</gene>
<feature type="transit peptide" description="Mitochondrion" evidence="2">
    <location>
        <begin position="1"/>
        <end position="48"/>
    </location>
</feature>
<feature type="chain" id="PRO_0000311312" description="tRNA methyltransferase 10 homolog C">
    <location>
        <begin position="49"/>
        <end position="448"/>
    </location>
</feature>
<feature type="domain" description="SAM-dependent MTase TRM10-type" evidence="3">
    <location>
        <begin position="190"/>
        <end position="382"/>
    </location>
</feature>
<feature type="region of interest" description="Disordered" evidence="4">
    <location>
        <begin position="144"/>
        <end position="167"/>
    </location>
</feature>
<feature type="region of interest" description="Disordered" evidence="4">
    <location>
        <begin position="429"/>
        <end position="448"/>
    </location>
</feature>
<feature type="coiled-coil region" evidence="2">
    <location>
        <begin position="137"/>
        <end position="165"/>
    </location>
</feature>
<protein>
    <recommendedName>
        <fullName evidence="5">tRNA methyltransferase 10 homolog C</fullName>
    </recommendedName>
    <alternativeName>
        <fullName evidence="1">Mitochondrial ribonuclease P protein 1</fullName>
        <shortName evidence="1">Mitochondrial RNase P protein 1</shortName>
    </alternativeName>
    <alternativeName>
        <fullName evidence="1">RNA (guanine-9-)-methyltransferase domain-containing protein 1</fullName>
    </alternativeName>
    <alternativeName>
        <fullName evidence="1">mRNA methyladenosine-N(1)-methyltransferase</fullName>
        <ecNumber evidence="1">2.1.1.-</ecNumber>
    </alternativeName>
    <alternativeName>
        <fullName evidence="1">tRNA (adenine(9)-N(1))-methyltransferase</fullName>
        <ecNumber evidence="1">2.1.1.218</ecNumber>
    </alternativeName>
    <alternativeName>
        <fullName evidence="1">tRNA (guanine(9)-N(1))-methyltransferase</fullName>
        <ecNumber evidence="1">2.1.1.221</ecNumber>
    </alternativeName>
</protein>
<keyword id="KW-0175">Coiled coil</keyword>
<keyword id="KW-0489">Methyltransferase</keyword>
<keyword id="KW-0496">Mitochondrion</keyword>
<keyword id="KW-1135">Mitochondrion nucleoid</keyword>
<keyword id="KW-1185">Reference proteome</keyword>
<keyword id="KW-0949">S-adenosyl-L-methionine</keyword>
<keyword id="KW-0808">Transferase</keyword>
<keyword id="KW-0809">Transit peptide</keyword>
<keyword id="KW-0819">tRNA processing</keyword>
<accession>A4IHS0</accession>
<name>TM10C_XENTR</name>
<sequence length="448" mass="52300">MAFVNTLLRTIRCSAVHTLVQEGRSLSLLKASHQLTQSRKIMLSNHVRKEEAKSEPNETLDLEEWKSILKSDIGNAEMVKTETQEDSSLNEMQELVEMWRLAGRAVPQSITTEQLQVLMELPTKTARKKYLKYLSVREVMKTNRKEKKKELKESKSKIESLDQLETKEDTPEKKNTFLLHVWDKSIDTMQRWKCVQAMKFGQPLVFDMVYEKNMSRYELENTVCQLMESEGWNRRSTDPFHIYFCSLQPYSMYHKELVKRYIGAWDNVFVTATDKSHVEMFPKEQLVYLTADSPNELKHFDHTKIYIIGSLVDRCQQTGLSLANAKRLNLATARLPLDRYLKWDVGAKNLTLDQMIRILLCLKDTGDWKKALSFVPNRKHDGFAEPAASKKRNIKNDGGMEYAASTKRNLQKNSKMYKFGASKSFIKPERTDDTSIRSTRKRWWEEEN</sequence>
<comment type="function">
    <text evidence="1">Mitochondrial tRNA N(1)-methyltransferase involved in mitochondrial tRNA maturation. Component of mitochondrial ribonuclease P, which cleaves tRNA molecules in their 5'-ends. Together with hsd17b10/mrpp2, forms a subcomplex of the mitochondrial ribonuclease P, named MRPP1-MRPP2 subcomplex, which displays functions that are independent of the ribonuclease P activity. The MRPP1-MRPP2 subcomplex catalyzes the formation of N(1)-methylguanine and N(1)-methyladenine at position 9 (m1G9 and m1A9, respectively) in tRNAs; trmt10c/mrpp1 acting as the catalytic N(1)-methyltransferase subunit. The MRPP1-MRPP2 subcomplex also acts as a tRNA maturation platform: following 5'-end cleavage by the mitochondrial ribonuclease P complex, the MRPP1-MRPP2 subcomplex enhances the efficiency of 3'-processing catalyzed by ELAC2, retains the tRNA product after elac2 processing and presents the nascent tRNA to the mitochondrial CCA tRNA nucleotidyltransferase TRNT1 enzyme. In addition to tRNA N(1)-methyltransferase activity, trmt10c/mrpp1 also acts as a mRNA N(1)-methyltransferase by mediating methylation of adenosine residues at the N(1) position of MT-ND5 mRNA.</text>
</comment>
<comment type="catalytic activity">
    <reaction evidence="1">
        <text>adenosine(9) in tRNA + S-adenosyl-L-methionine = N(1)-methyladenosine(9) in tRNA + S-adenosyl-L-homocysteine + H(+)</text>
        <dbReference type="Rhea" id="RHEA:43148"/>
        <dbReference type="Rhea" id="RHEA-COMP:10363"/>
        <dbReference type="Rhea" id="RHEA-COMP:10364"/>
        <dbReference type="ChEBI" id="CHEBI:15378"/>
        <dbReference type="ChEBI" id="CHEBI:57856"/>
        <dbReference type="ChEBI" id="CHEBI:59789"/>
        <dbReference type="ChEBI" id="CHEBI:74411"/>
        <dbReference type="ChEBI" id="CHEBI:74491"/>
        <dbReference type="EC" id="2.1.1.218"/>
    </reaction>
</comment>
<comment type="catalytic activity">
    <reaction evidence="1">
        <text>guanosine(9) in tRNA + S-adenosyl-L-methionine = N(1)-methylguanosine(9) in tRNA + S-adenosyl-L-homocysteine + H(+)</text>
        <dbReference type="Rhea" id="RHEA:43156"/>
        <dbReference type="Rhea" id="RHEA-COMP:10367"/>
        <dbReference type="Rhea" id="RHEA-COMP:10368"/>
        <dbReference type="ChEBI" id="CHEBI:15378"/>
        <dbReference type="ChEBI" id="CHEBI:57856"/>
        <dbReference type="ChEBI" id="CHEBI:59789"/>
        <dbReference type="ChEBI" id="CHEBI:73542"/>
        <dbReference type="ChEBI" id="CHEBI:74269"/>
        <dbReference type="EC" id="2.1.1.221"/>
    </reaction>
</comment>
<comment type="catalytic activity">
    <reaction evidence="1">
        <text>an adenosine in mRNA + S-adenosyl-L-methionine = an N(1)-methyladenosine in mRNA + S-adenosyl-L-homocysteine + H(+)</text>
        <dbReference type="Rhea" id="RHEA:55392"/>
        <dbReference type="Rhea" id="RHEA-COMP:12414"/>
        <dbReference type="Rhea" id="RHEA-COMP:12415"/>
        <dbReference type="ChEBI" id="CHEBI:15378"/>
        <dbReference type="ChEBI" id="CHEBI:57856"/>
        <dbReference type="ChEBI" id="CHEBI:59789"/>
        <dbReference type="ChEBI" id="CHEBI:74411"/>
        <dbReference type="ChEBI" id="CHEBI:74491"/>
    </reaction>
</comment>
<comment type="subunit">
    <text evidence="1">Component of mitochondrial ribonuclease P. Interacts with HSD17B10/MRPP2.</text>
</comment>
<comment type="subcellular location">
    <subcellularLocation>
        <location evidence="1">Mitochondrion matrix</location>
        <location evidence="1">Mitochondrion nucleoid</location>
    </subcellularLocation>
</comment>
<comment type="similarity">
    <text evidence="3">Belongs to the class IV-like SAM-binding methyltransferase superfamily. TRM10 family.</text>
</comment>